<accession>W7NCN7</accession>
<sequence length="357" mass="39248">MGGEVSNKTWVFKKSPSSLPEPGVHTAFEDRPLSLVAPPGGLVIKLLTAGLDPHQRDRMRGAGNVDYVPGYELDEPITNFSIAKVIRSDNDAFEEGSLIAGSLPIAEYGIIPKELIDARAMASPLVWKVSNNYNLDLKHYVGTLGLAGMTAWNSFYGLVKPVKGETIWINAASSSVGEVVVQLAKIEGMKVIASVSSDEKLDYVVNELGADVGFNYQKEPVGKALKRLAPDGLDVVFENVGGDHFQAAIENMKWFGRIISCGTASQYNKPVEEQYGVTNLSEIFRRRIKIQGFIFWDDNIYTDNIENFKATMPKWVSEGKIKSRYTQFEGIEQADKAFLSMFTGGSHGKTVLKISDP</sequence>
<organism>
    <name type="scientific">Gibberella moniliformis (strain M3125 / FGSC 7600)</name>
    <name type="common">Maize ear and stalk rot fungus</name>
    <name type="synonym">Fusarium verticillioides</name>
    <dbReference type="NCBI Taxonomy" id="334819"/>
    <lineage>
        <taxon>Eukaryota</taxon>
        <taxon>Fungi</taxon>
        <taxon>Dikarya</taxon>
        <taxon>Ascomycota</taxon>
        <taxon>Pezizomycotina</taxon>
        <taxon>Sordariomycetes</taxon>
        <taxon>Hypocreomycetidae</taxon>
        <taxon>Hypocreales</taxon>
        <taxon>Nectriaceae</taxon>
        <taxon>Fusarium</taxon>
        <taxon>Fusarium fujikuroi species complex</taxon>
    </lineage>
</organism>
<name>FUB6_GIBM7</name>
<proteinExistence type="evidence at protein level"/>
<keyword id="KW-0560">Oxidoreductase</keyword>
<keyword id="KW-1185">Reference proteome</keyword>
<feature type="chain" id="PRO_0000437334" description="Dehydrogenase FUB6">
    <location>
        <begin position="1"/>
        <end position="357"/>
    </location>
</feature>
<protein>
    <recommendedName>
        <fullName evidence="11">Dehydrogenase FUB6</fullName>
        <ecNumber evidence="13">1.-.-.-</ecNumber>
    </recommendedName>
    <alternativeName>
        <fullName evidence="11">Fusaric acid biosynthesis protein 6</fullName>
    </alternativeName>
</protein>
<dbReference type="EC" id="1.-.-.-" evidence="13"/>
<dbReference type="EMBL" id="CM000580">
    <property type="protein sequence ID" value="EWG54272.1"/>
    <property type="molecule type" value="Genomic_DNA"/>
</dbReference>
<dbReference type="RefSeq" id="XP_018760463.1">
    <property type="nucleotide sequence ID" value="XM_018901868.1"/>
</dbReference>
<dbReference type="SMR" id="W7NCN7"/>
<dbReference type="STRING" id="334819.W7NCN7"/>
<dbReference type="EnsemblFungi" id="FVEG_12528T0">
    <property type="protein sequence ID" value="FVEG_12528T0"/>
    <property type="gene ID" value="FVEG_12528"/>
</dbReference>
<dbReference type="GeneID" id="30069961"/>
<dbReference type="KEGG" id="fvr:FVEG_12528"/>
<dbReference type="VEuPathDB" id="FungiDB:FVEG_12528"/>
<dbReference type="eggNOG" id="KOG1196">
    <property type="taxonomic scope" value="Eukaryota"/>
</dbReference>
<dbReference type="HOGENOM" id="CLU_026673_29_1_1"/>
<dbReference type="OMA" id="CGTASQY"/>
<dbReference type="OrthoDB" id="32899at110618"/>
<dbReference type="PHI-base" id="PHI:3386"/>
<dbReference type="Proteomes" id="UP000009096">
    <property type="component" value="Chromosome 3"/>
</dbReference>
<dbReference type="GO" id="GO:0016628">
    <property type="term" value="F:oxidoreductase activity, acting on the CH-CH group of donors, NAD or NADP as acceptor"/>
    <property type="evidence" value="ECO:0007669"/>
    <property type="project" value="InterPro"/>
</dbReference>
<dbReference type="CDD" id="cd05288">
    <property type="entry name" value="PGDH"/>
    <property type="match status" value="1"/>
</dbReference>
<dbReference type="FunFam" id="3.40.50.720:FF:000121">
    <property type="entry name" value="Prostaglandin reductase 2"/>
    <property type="match status" value="1"/>
</dbReference>
<dbReference type="Gene3D" id="3.90.180.10">
    <property type="entry name" value="Medium-chain alcohol dehydrogenases, catalytic domain"/>
    <property type="match status" value="1"/>
</dbReference>
<dbReference type="Gene3D" id="3.40.50.720">
    <property type="entry name" value="NAD(P)-binding Rossmann-like Domain"/>
    <property type="match status" value="1"/>
</dbReference>
<dbReference type="InterPro" id="IPR013149">
    <property type="entry name" value="ADH-like_C"/>
</dbReference>
<dbReference type="InterPro" id="IPR041694">
    <property type="entry name" value="ADH_N_2"/>
</dbReference>
<dbReference type="InterPro" id="IPR011032">
    <property type="entry name" value="GroES-like_sf"/>
</dbReference>
<dbReference type="InterPro" id="IPR045010">
    <property type="entry name" value="MDR_fam"/>
</dbReference>
<dbReference type="InterPro" id="IPR036291">
    <property type="entry name" value="NAD(P)-bd_dom_sf"/>
</dbReference>
<dbReference type="InterPro" id="IPR020843">
    <property type="entry name" value="PKS_ER"/>
</dbReference>
<dbReference type="PANTHER" id="PTHR43205">
    <property type="entry name" value="PROSTAGLANDIN REDUCTASE"/>
    <property type="match status" value="1"/>
</dbReference>
<dbReference type="PANTHER" id="PTHR43205:SF7">
    <property type="entry name" value="PROSTAGLANDIN REDUCTASE 1"/>
    <property type="match status" value="1"/>
</dbReference>
<dbReference type="Pfam" id="PF16884">
    <property type="entry name" value="ADH_N_2"/>
    <property type="match status" value="1"/>
</dbReference>
<dbReference type="Pfam" id="PF00107">
    <property type="entry name" value="ADH_zinc_N"/>
    <property type="match status" value="1"/>
</dbReference>
<dbReference type="SMART" id="SM00829">
    <property type="entry name" value="PKS_ER"/>
    <property type="match status" value="1"/>
</dbReference>
<dbReference type="SUPFAM" id="SSF50129">
    <property type="entry name" value="GroES-like"/>
    <property type="match status" value="1"/>
</dbReference>
<dbReference type="SUPFAM" id="SSF51735">
    <property type="entry name" value="NAD(P)-binding Rossmann-fold domains"/>
    <property type="match status" value="1"/>
</dbReference>
<gene>
    <name evidence="11" type="primary">FUB6</name>
    <name type="ORF">FVEG_12528</name>
</gene>
<comment type="function">
    <text evidence="1 10">Dehydrogenase; part of the gene cluster that mediates the biosynthesis of fusaric acid, a mycotoxin with low to moderate toxicity to animals and humans, but with high phytotoxic properties (PubMed:25372119). L-aspartate is suggested as fusaric acid amino acid precursor that is activated and further processed to O-acetyl-L-homoserine by cluster enzymes aspartate kinase FUB3 and homoserine O-acetyltransferase FUB5, as well as enzymes of the primary metabolism (By similarity). The polyketide synthase (PKS) FUB1 generates the triketide trans-2-hexenal which is presumptively released by the hydrolase FUB4 and linked to the NRPS-bound amino acid precursor by NAD(P)-dependent dehydrogenase FUB6 (By similarity). FUB1, FUB4, and the non-canonical NRPS Fub8 may form an enzyme complex (By similarity). Further processing of the NRPS-bound intermediate might be carried out by FUB6 and the O-acetylhomoserine FUB7, enabling a spontaneous electrocyclization to close the carbon backbone of fusaric acid (By similarity). Dihydrofusaric acid is likely to be released via reduction by the thioester reductase (TR) domain of FUB8 whereupon the final oxidation to fusaric acid may (also) be performed by the FMN-dependent dehydrogenase FUB9 (By similarity).</text>
</comment>
<comment type="pathway">
    <text evidence="10">Mycotoxin biosynthesis.</text>
</comment>
<comment type="induction">
    <text evidence="6">Expression is positively regulated by the secondary metabolism regulator LAE1 (PubMed:22713715).</text>
</comment>
<comment type="biotechnology">
    <text evidence="2 3 4 5 7 8 9">Fusaric acid is phytotoxic to plants such as cotton and banana (PubMed:20955724, PubMed:23922960). It has been shown to induce programmed cell death in plants (PubMed:16868776, PubMed:23838885). In addition to a mild toxicity to animals, fusaric acid exhibits acanthamoebicidal, antioomycete, and antimycobacterial activities (PubMed:17927749, PubMed:21811925, PubMed:22864988).</text>
</comment>
<comment type="similarity">
    <text evidence="12">Belongs to the zinc-containing alcohol dehydrogenase family. Quinone oxidoreductase subfamily.</text>
</comment>
<reference key="1">
    <citation type="journal article" date="2010" name="Nature">
        <title>Comparative genomics reveals mobile pathogenicity chromosomes in Fusarium.</title>
        <authorList>
            <person name="Ma L.-J."/>
            <person name="van der Does H.C."/>
            <person name="Borkovich K.A."/>
            <person name="Coleman J.J."/>
            <person name="Daboussi M.-J."/>
            <person name="Di Pietro A."/>
            <person name="Dufresne M."/>
            <person name="Freitag M."/>
            <person name="Grabherr M."/>
            <person name="Henrissat B."/>
            <person name="Houterman P.M."/>
            <person name="Kang S."/>
            <person name="Shim W.-B."/>
            <person name="Woloshuk C."/>
            <person name="Xie X."/>
            <person name="Xu J.-R."/>
            <person name="Antoniw J."/>
            <person name="Baker S.E."/>
            <person name="Bluhm B.H."/>
            <person name="Breakspear A."/>
            <person name="Brown D.W."/>
            <person name="Butchko R.A.E."/>
            <person name="Chapman S."/>
            <person name="Coulson R."/>
            <person name="Coutinho P.M."/>
            <person name="Danchin E.G.J."/>
            <person name="Diener A."/>
            <person name="Gale L.R."/>
            <person name="Gardiner D.M."/>
            <person name="Goff S."/>
            <person name="Hammond-Kosack K.E."/>
            <person name="Hilburn K."/>
            <person name="Hua-Van A."/>
            <person name="Jonkers W."/>
            <person name="Kazan K."/>
            <person name="Kodira C.D."/>
            <person name="Koehrsen M."/>
            <person name="Kumar L."/>
            <person name="Lee Y.-H."/>
            <person name="Li L."/>
            <person name="Manners J.M."/>
            <person name="Miranda-Saavedra D."/>
            <person name="Mukherjee M."/>
            <person name="Park G."/>
            <person name="Park J."/>
            <person name="Park S.-Y."/>
            <person name="Proctor R.H."/>
            <person name="Regev A."/>
            <person name="Ruiz-Roldan M.C."/>
            <person name="Sain D."/>
            <person name="Sakthikumar S."/>
            <person name="Sykes S."/>
            <person name="Schwartz D.C."/>
            <person name="Turgeon B.G."/>
            <person name="Wapinski I."/>
            <person name="Yoder O."/>
            <person name="Young S."/>
            <person name="Zeng Q."/>
            <person name="Zhou S."/>
            <person name="Galagan J."/>
            <person name="Cuomo C.A."/>
            <person name="Kistler H.C."/>
            <person name="Rep M."/>
        </authorList>
    </citation>
    <scope>NUCLEOTIDE SEQUENCE [LARGE SCALE GENOMIC DNA]</scope>
    <source>
        <strain>M3125 / FGSC 7600</strain>
    </source>
</reference>
<reference key="2">
    <citation type="journal article" date="2006" name="Planta">
        <title>Fusaric acid induces apoptosis in saffron root-tip cells: roles of caspase-like activity, cytochrome c, and H2O2.</title>
        <authorList>
            <person name="Samadi L."/>
            <person name="Shahsavan Behboodi B."/>
        </authorList>
    </citation>
    <scope>BIOTECHNOLOGY</scope>
</reference>
<reference key="3">
    <citation type="journal article" date="2008" name="J. Appl. Microbiol.">
        <title>Bikaverin and fusaric acid from Fusarium oxysporum show antioomycete activity against Phytophthora infestans.</title>
        <authorList>
            <person name="Son S.W."/>
            <person name="Kim H.Y."/>
            <person name="Choi G.J."/>
            <person name="Lim H.K."/>
            <person name="Jang K.S."/>
            <person name="Lee S.O."/>
            <person name="Lee S."/>
            <person name="Sung N.D."/>
            <person name="Kim J.C."/>
        </authorList>
    </citation>
    <scope>BIOTECHNOLOGY</scope>
</reference>
<reference key="4">
    <citation type="journal article" date="2011" name="Arch. Pharm. Res.">
        <title>Antimycobacterial activity of fusaric acid from a mangrove endophyte and its metal complexes.</title>
        <authorList>
            <person name="Pan J.H."/>
            <person name="Chen Y."/>
            <person name="Huang Y.H."/>
            <person name="Tao Y.W."/>
            <person name="Wang J."/>
            <person name="Li Y."/>
            <person name="Peng Y."/>
            <person name="Dong T."/>
            <person name="Lai X.M."/>
            <person name="Lin Y.C."/>
        </authorList>
    </citation>
    <scope>BIOTECHNOLOGY</scope>
</reference>
<reference key="5">
    <citation type="journal article" date="2011" name="Toxicon">
        <title>Phytotoxicity of fusaric acid and analogs to cotton.</title>
        <authorList>
            <person name="Stipanovic R.D."/>
            <person name="Puckhaber L.S."/>
            <person name="Liu J."/>
            <person name="Bell A.A."/>
        </authorList>
    </citation>
    <scope>BIOTECHNOLOGY</scope>
</reference>
<reference key="6">
    <citation type="journal article" date="2012" name="Fungal Genet. Biol.">
        <title>Lae1 regulates expression of multiple secondary metabolite gene clusters in Fusarium verticillioides.</title>
        <authorList>
            <person name="Butchko R.A."/>
            <person name="Brown D.W."/>
            <person name="Busman M."/>
            <person name="Tudzynski B."/>
            <person name="Wiemann P."/>
        </authorList>
    </citation>
    <scope>INDUCTION</scope>
</reference>
<reference key="7">
    <citation type="journal article" date="2012" name="Planta Med.">
        <title>In vitro acanthamoebicidal activity of fusaric acid and dehydrofusaric acid from an endophytic fungus Fusarium sp. Tlau3.</title>
        <authorList>
            <person name="Boonman N."/>
            <person name="Prachya S."/>
            <person name="Boonmee A."/>
            <person name="Kittakoop P."/>
            <person name="Wiyakrutta S."/>
            <person name="Sriubolmas N."/>
            <person name="Warit S."/>
            <person name="Dharmkrong-At Chusattayanond A."/>
        </authorList>
    </citation>
    <scope>BIOTECHNOLOGY</scope>
</reference>
<reference key="8">
    <citation type="journal article" date="2013" name="Planta">
        <title>Fusaric acid induction of programmed cell death modulated through nitric oxide signalling in tobacco suspension cells.</title>
        <authorList>
            <person name="Jiao J."/>
            <person name="Zhou B."/>
            <person name="Zhu X."/>
            <person name="Gao Z."/>
            <person name="Liang Y."/>
        </authorList>
    </citation>
    <scope>BIOTECHNOLOGY</scope>
</reference>
<reference key="9">
    <citation type="journal article" date="2013" name="PLoS ONE">
        <title>Contamination of bananas with beauvericin and fusaric acid produced by Fusarium oxysporum f. sp. cubense.</title>
        <authorList>
            <person name="Li C."/>
            <person name="Zuo C."/>
            <person name="Deng G."/>
            <person name="Kuang R."/>
            <person name="Yang Q."/>
            <person name="Hu C."/>
            <person name="Sheng O."/>
            <person name="Zhang S."/>
            <person name="Ma L."/>
            <person name="Wei Y."/>
            <person name="Yang J."/>
            <person name="Liu S."/>
            <person name="Biswas M.K."/>
            <person name="Viljoen A."/>
            <person name="Yi G."/>
        </authorList>
    </citation>
    <scope>BIOTECHNOLOGY</scope>
</reference>
<reference key="10">
    <citation type="journal article" date="2015" name="Mol. Plant Microbe Interact.">
        <title>Identification of a 12-gene fusaric acid biosynthetic gene cluster in Fusarium species through comparative and functional genomics.</title>
        <authorList>
            <person name="Brown D.W."/>
            <person name="Lee S.H."/>
            <person name="Kim L.H."/>
            <person name="Ryu J.G."/>
            <person name="Lee S."/>
            <person name="Seo Y."/>
            <person name="Kim Y.H."/>
            <person name="Busman M."/>
            <person name="Yun S.H."/>
            <person name="Proctor R.H."/>
            <person name="Lee T."/>
        </authorList>
    </citation>
    <scope>FUNCTION</scope>
    <scope>CATALYTIC ACTIVITY</scope>
</reference>
<evidence type="ECO:0000250" key="1">
    <source>
        <dbReference type="UniProtKB" id="S0DRW9"/>
    </source>
</evidence>
<evidence type="ECO:0000269" key="2">
    <source>
    </source>
</evidence>
<evidence type="ECO:0000269" key="3">
    <source>
    </source>
</evidence>
<evidence type="ECO:0000269" key="4">
    <source>
    </source>
</evidence>
<evidence type="ECO:0000269" key="5">
    <source>
    </source>
</evidence>
<evidence type="ECO:0000269" key="6">
    <source>
    </source>
</evidence>
<evidence type="ECO:0000269" key="7">
    <source>
    </source>
</evidence>
<evidence type="ECO:0000269" key="8">
    <source>
    </source>
</evidence>
<evidence type="ECO:0000269" key="9">
    <source>
    </source>
</evidence>
<evidence type="ECO:0000269" key="10">
    <source>
    </source>
</evidence>
<evidence type="ECO:0000303" key="11">
    <source>
    </source>
</evidence>
<evidence type="ECO:0000305" key="12"/>
<evidence type="ECO:0000305" key="13">
    <source>
    </source>
</evidence>